<accession>B8FU83</accession>
<reference key="1">
    <citation type="journal article" date="2012" name="BMC Microbiol.">
        <title>Genome sequence of Desulfitobacterium hafniense DCB-2, a Gram-positive anaerobe capable of dehalogenation and metal reduction.</title>
        <authorList>
            <person name="Kim S.H."/>
            <person name="Harzman C."/>
            <person name="Davis J.K."/>
            <person name="Hutcheson R."/>
            <person name="Broderick J.B."/>
            <person name="Marsh T.L."/>
            <person name="Tiedje J.M."/>
        </authorList>
    </citation>
    <scope>NUCLEOTIDE SEQUENCE [LARGE SCALE GENOMIC DNA]</scope>
    <source>
        <strain>DSM 10664 / DCB-2</strain>
    </source>
</reference>
<evidence type="ECO:0000250" key="1"/>
<evidence type="ECO:0000255" key="2">
    <source>
        <dbReference type="HAMAP-Rule" id="MF_00103"/>
    </source>
</evidence>
<comment type="function">
    <text evidence="2">Involved in base excision repair of DNA damaged by oxidation or by mutagenic agents. Acts as a DNA glycosylase that recognizes and removes damaged bases. Has a preference for oxidized purines, such as 7,8-dihydro-8-oxoguanine (8-oxoG). Has AP (apurinic/apyrimidinic) lyase activity and introduces nicks in the DNA strand. Cleaves the DNA backbone by beta-delta elimination to generate a single-strand break at the site of the removed base with both 3'- and 5'-phosphates.</text>
</comment>
<comment type="catalytic activity">
    <reaction evidence="2">
        <text>Hydrolysis of DNA containing ring-opened 7-methylguanine residues, releasing 2,6-diamino-4-hydroxy-5-(N-methyl)formamidopyrimidine.</text>
        <dbReference type="EC" id="3.2.2.23"/>
    </reaction>
</comment>
<comment type="catalytic activity">
    <reaction evidence="2">
        <text>2'-deoxyribonucleotide-(2'-deoxyribose 5'-phosphate)-2'-deoxyribonucleotide-DNA = a 3'-end 2'-deoxyribonucleotide-(2,3-dehydro-2,3-deoxyribose 5'-phosphate)-DNA + a 5'-end 5'-phospho-2'-deoxyribonucleoside-DNA + H(+)</text>
        <dbReference type="Rhea" id="RHEA:66592"/>
        <dbReference type="Rhea" id="RHEA-COMP:13180"/>
        <dbReference type="Rhea" id="RHEA-COMP:16897"/>
        <dbReference type="Rhea" id="RHEA-COMP:17067"/>
        <dbReference type="ChEBI" id="CHEBI:15378"/>
        <dbReference type="ChEBI" id="CHEBI:136412"/>
        <dbReference type="ChEBI" id="CHEBI:157695"/>
        <dbReference type="ChEBI" id="CHEBI:167181"/>
        <dbReference type="EC" id="4.2.99.18"/>
    </reaction>
</comment>
<comment type="cofactor">
    <cofactor evidence="2">
        <name>Zn(2+)</name>
        <dbReference type="ChEBI" id="CHEBI:29105"/>
    </cofactor>
    <text evidence="2">Binds 1 zinc ion per subunit.</text>
</comment>
<comment type="subunit">
    <text evidence="2">Monomer.</text>
</comment>
<comment type="similarity">
    <text evidence="2">Belongs to the FPG family.</text>
</comment>
<name>FPG_DESHD</name>
<dbReference type="EC" id="3.2.2.23" evidence="2"/>
<dbReference type="EC" id="4.2.99.18" evidence="2"/>
<dbReference type="EMBL" id="CP001336">
    <property type="protein sequence ID" value="ACL20497.1"/>
    <property type="molecule type" value="Genomic_DNA"/>
</dbReference>
<dbReference type="RefSeq" id="WP_005816814.1">
    <property type="nucleotide sequence ID" value="NC_011830.1"/>
</dbReference>
<dbReference type="SMR" id="B8FU83"/>
<dbReference type="KEGG" id="dhd:Dhaf_2469"/>
<dbReference type="HOGENOM" id="CLU_038423_1_2_9"/>
<dbReference type="Proteomes" id="UP000007726">
    <property type="component" value="Chromosome"/>
</dbReference>
<dbReference type="GO" id="GO:0034039">
    <property type="term" value="F:8-oxo-7,8-dihydroguanine DNA N-glycosylase activity"/>
    <property type="evidence" value="ECO:0007669"/>
    <property type="project" value="TreeGrafter"/>
</dbReference>
<dbReference type="GO" id="GO:0140078">
    <property type="term" value="F:class I DNA-(apurinic or apyrimidinic site) endonuclease activity"/>
    <property type="evidence" value="ECO:0007669"/>
    <property type="project" value="UniProtKB-EC"/>
</dbReference>
<dbReference type="GO" id="GO:0003684">
    <property type="term" value="F:damaged DNA binding"/>
    <property type="evidence" value="ECO:0007669"/>
    <property type="project" value="InterPro"/>
</dbReference>
<dbReference type="GO" id="GO:0008270">
    <property type="term" value="F:zinc ion binding"/>
    <property type="evidence" value="ECO:0007669"/>
    <property type="project" value="UniProtKB-UniRule"/>
</dbReference>
<dbReference type="GO" id="GO:0006284">
    <property type="term" value="P:base-excision repair"/>
    <property type="evidence" value="ECO:0007669"/>
    <property type="project" value="InterPro"/>
</dbReference>
<dbReference type="CDD" id="cd08966">
    <property type="entry name" value="EcFpg-like_N"/>
    <property type="match status" value="1"/>
</dbReference>
<dbReference type="FunFam" id="1.10.8.50:FF:000003">
    <property type="entry name" value="Formamidopyrimidine-DNA glycosylase"/>
    <property type="match status" value="1"/>
</dbReference>
<dbReference type="Gene3D" id="1.10.8.50">
    <property type="match status" value="1"/>
</dbReference>
<dbReference type="Gene3D" id="3.20.190.10">
    <property type="entry name" value="MutM-like, N-terminal"/>
    <property type="match status" value="1"/>
</dbReference>
<dbReference type="HAMAP" id="MF_00103">
    <property type="entry name" value="Fapy_DNA_glycosyl"/>
    <property type="match status" value="1"/>
</dbReference>
<dbReference type="InterPro" id="IPR015886">
    <property type="entry name" value="DNA_glyclase/AP_lyase_DNA-bd"/>
</dbReference>
<dbReference type="InterPro" id="IPR015887">
    <property type="entry name" value="DNA_glyclase_Znf_dom_DNA_BS"/>
</dbReference>
<dbReference type="InterPro" id="IPR020629">
    <property type="entry name" value="Formamido-pyr_DNA_Glyclase"/>
</dbReference>
<dbReference type="InterPro" id="IPR012319">
    <property type="entry name" value="FPG_cat"/>
</dbReference>
<dbReference type="InterPro" id="IPR035937">
    <property type="entry name" value="MutM-like_N-ter"/>
</dbReference>
<dbReference type="InterPro" id="IPR010979">
    <property type="entry name" value="Ribosomal_uS13-like_H2TH"/>
</dbReference>
<dbReference type="InterPro" id="IPR000214">
    <property type="entry name" value="Znf_DNA_glyclase/AP_lyase"/>
</dbReference>
<dbReference type="InterPro" id="IPR010663">
    <property type="entry name" value="Znf_FPG/IleRS"/>
</dbReference>
<dbReference type="NCBIfam" id="TIGR00577">
    <property type="entry name" value="fpg"/>
    <property type="match status" value="1"/>
</dbReference>
<dbReference type="NCBIfam" id="NF002211">
    <property type="entry name" value="PRK01103.1"/>
    <property type="match status" value="1"/>
</dbReference>
<dbReference type="PANTHER" id="PTHR22993">
    <property type="entry name" value="FORMAMIDOPYRIMIDINE-DNA GLYCOSYLASE"/>
    <property type="match status" value="1"/>
</dbReference>
<dbReference type="PANTHER" id="PTHR22993:SF9">
    <property type="entry name" value="FORMAMIDOPYRIMIDINE-DNA GLYCOSYLASE"/>
    <property type="match status" value="1"/>
</dbReference>
<dbReference type="Pfam" id="PF01149">
    <property type="entry name" value="Fapy_DNA_glyco"/>
    <property type="match status" value="1"/>
</dbReference>
<dbReference type="Pfam" id="PF06831">
    <property type="entry name" value="H2TH"/>
    <property type="match status" value="1"/>
</dbReference>
<dbReference type="Pfam" id="PF06827">
    <property type="entry name" value="zf-FPG_IleRS"/>
    <property type="match status" value="1"/>
</dbReference>
<dbReference type="SMART" id="SM00898">
    <property type="entry name" value="Fapy_DNA_glyco"/>
    <property type="match status" value="1"/>
</dbReference>
<dbReference type="SMART" id="SM01232">
    <property type="entry name" value="H2TH"/>
    <property type="match status" value="1"/>
</dbReference>
<dbReference type="SUPFAM" id="SSF57716">
    <property type="entry name" value="Glucocorticoid receptor-like (DNA-binding domain)"/>
    <property type="match status" value="1"/>
</dbReference>
<dbReference type="SUPFAM" id="SSF81624">
    <property type="entry name" value="N-terminal domain of MutM-like DNA repair proteins"/>
    <property type="match status" value="1"/>
</dbReference>
<dbReference type="SUPFAM" id="SSF46946">
    <property type="entry name" value="S13-like H2TH domain"/>
    <property type="match status" value="1"/>
</dbReference>
<dbReference type="PROSITE" id="PS51068">
    <property type="entry name" value="FPG_CAT"/>
    <property type="match status" value="1"/>
</dbReference>
<dbReference type="PROSITE" id="PS01242">
    <property type="entry name" value="ZF_FPG_1"/>
    <property type="match status" value="1"/>
</dbReference>
<dbReference type="PROSITE" id="PS51066">
    <property type="entry name" value="ZF_FPG_2"/>
    <property type="match status" value="1"/>
</dbReference>
<sequence length="273" mass="30869">MPELPEVETIRRSLSQHILERRIEEILIRWPGAVEGYEEKTFADAVRGLKFQSIERRGKYLLFTLEEGWSFIAHMRMTGRMVYHAQSQEPEKHTHVVLKLSSGEIHFTDTRKFGRLQLVRTEERLQQPSLARLGPEPLEEGFSAAELGRRLAPRKLAIKAALLDQTLVAGIGNIYADEALFRAGIAPERCANSLTKEEIEKLYPAICQVLEEGIAANGTSFRDYQDANGERGDFQKELKVYGRGGEPCKECGHTLVRIRLAGRSTVFCPCCQV</sequence>
<protein>
    <recommendedName>
        <fullName evidence="2">Formamidopyrimidine-DNA glycosylase</fullName>
        <shortName evidence="2">Fapy-DNA glycosylase</shortName>
        <ecNumber evidence="2">3.2.2.23</ecNumber>
    </recommendedName>
    <alternativeName>
        <fullName evidence="2">DNA-(apurinic or apyrimidinic site) lyase MutM</fullName>
        <shortName evidence="2">AP lyase MutM</shortName>
        <ecNumber evidence="2">4.2.99.18</ecNumber>
    </alternativeName>
</protein>
<proteinExistence type="inferred from homology"/>
<gene>
    <name evidence="2" type="primary">mutM</name>
    <name evidence="2" type="synonym">fpg</name>
    <name type="ordered locus">Dhaf_2469</name>
</gene>
<keyword id="KW-0227">DNA damage</keyword>
<keyword id="KW-0234">DNA repair</keyword>
<keyword id="KW-0238">DNA-binding</keyword>
<keyword id="KW-0326">Glycosidase</keyword>
<keyword id="KW-0378">Hydrolase</keyword>
<keyword id="KW-0456">Lyase</keyword>
<keyword id="KW-0479">Metal-binding</keyword>
<keyword id="KW-0511">Multifunctional enzyme</keyword>
<keyword id="KW-0862">Zinc</keyword>
<keyword id="KW-0863">Zinc-finger</keyword>
<feature type="initiator methionine" description="Removed" evidence="1">
    <location>
        <position position="1"/>
    </location>
</feature>
<feature type="chain" id="PRO_1000118885" description="Formamidopyrimidine-DNA glycosylase">
    <location>
        <begin position="2"/>
        <end position="273"/>
    </location>
</feature>
<feature type="zinc finger region" description="FPG-type" evidence="2">
    <location>
        <begin position="239"/>
        <end position="273"/>
    </location>
</feature>
<feature type="active site" description="Schiff-base intermediate with DNA" evidence="2">
    <location>
        <position position="2"/>
    </location>
</feature>
<feature type="active site" description="Proton donor" evidence="2">
    <location>
        <position position="3"/>
    </location>
</feature>
<feature type="active site" description="Proton donor; for beta-elimination activity" evidence="2">
    <location>
        <position position="59"/>
    </location>
</feature>
<feature type="active site" description="Proton donor; for delta-elimination activity" evidence="2">
    <location>
        <position position="263"/>
    </location>
</feature>
<feature type="binding site" evidence="2">
    <location>
        <position position="93"/>
    </location>
    <ligand>
        <name>DNA</name>
        <dbReference type="ChEBI" id="CHEBI:16991"/>
    </ligand>
</feature>
<feature type="binding site" evidence="2">
    <location>
        <position position="111"/>
    </location>
    <ligand>
        <name>DNA</name>
        <dbReference type="ChEBI" id="CHEBI:16991"/>
    </ligand>
</feature>
<feature type="binding site" evidence="2">
    <location>
        <position position="154"/>
    </location>
    <ligand>
        <name>DNA</name>
        <dbReference type="ChEBI" id="CHEBI:16991"/>
    </ligand>
</feature>
<organism>
    <name type="scientific">Desulfitobacterium hafniense (strain DSM 10664 / DCB-2)</name>
    <dbReference type="NCBI Taxonomy" id="272564"/>
    <lineage>
        <taxon>Bacteria</taxon>
        <taxon>Bacillati</taxon>
        <taxon>Bacillota</taxon>
        <taxon>Clostridia</taxon>
        <taxon>Eubacteriales</taxon>
        <taxon>Desulfitobacteriaceae</taxon>
        <taxon>Desulfitobacterium</taxon>
    </lineage>
</organism>